<comment type="function">
    <text evidence="1">Binds to DNA and alters its conformation. May be involved in regulation of gene expression, nucleoid organization and DNA protection.</text>
</comment>
<comment type="subunit">
    <text evidence="1">Homodimer.</text>
</comment>
<comment type="subcellular location">
    <subcellularLocation>
        <location evidence="1">Cytoplasm</location>
        <location evidence="1">Nucleoid</location>
    </subcellularLocation>
</comment>
<comment type="similarity">
    <text evidence="1">Belongs to the YbaB/EbfC family.</text>
</comment>
<reference key="1">
    <citation type="journal article" date="2006" name="J. Bacteriol.">
        <title>Pathogenomic sequence analysis of Bacillus cereus and Bacillus thuringiensis isolates closely related to Bacillus anthracis.</title>
        <authorList>
            <person name="Han C.S."/>
            <person name="Xie G."/>
            <person name="Challacombe J.F."/>
            <person name="Altherr M.R."/>
            <person name="Bhotika S.S."/>
            <person name="Bruce D."/>
            <person name="Campbell C.S."/>
            <person name="Campbell M.L."/>
            <person name="Chen J."/>
            <person name="Chertkov O."/>
            <person name="Cleland C."/>
            <person name="Dimitrijevic M."/>
            <person name="Doggett N.A."/>
            <person name="Fawcett J.J."/>
            <person name="Glavina T."/>
            <person name="Goodwin L.A."/>
            <person name="Hill K.K."/>
            <person name="Hitchcock P."/>
            <person name="Jackson P.J."/>
            <person name="Keim P."/>
            <person name="Kewalramani A.R."/>
            <person name="Longmire J."/>
            <person name="Lucas S."/>
            <person name="Malfatti S."/>
            <person name="McMurry K."/>
            <person name="Meincke L.J."/>
            <person name="Misra M."/>
            <person name="Moseman B.L."/>
            <person name="Mundt M."/>
            <person name="Munk A.C."/>
            <person name="Okinaka R.T."/>
            <person name="Parson-Quintana B."/>
            <person name="Reilly L.P."/>
            <person name="Richardson P."/>
            <person name="Robinson D.L."/>
            <person name="Rubin E."/>
            <person name="Saunders E."/>
            <person name="Tapia R."/>
            <person name="Tesmer J.G."/>
            <person name="Thayer N."/>
            <person name="Thompson L.S."/>
            <person name="Tice H."/>
            <person name="Ticknor L.O."/>
            <person name="Wills P.L."/>
            <person name="Brettin T.S."/>
            <person name="Gilna P."/>
        </authorList>
    </citation>
    <scope>NUCLEOTIDE SEQUENCE [LARGE SCALE GENOMIC DNA]</scope>
    <source>
        <strain>97-27</strain>
    </source>
</reference>
<name>Y020_BACHK</name>
<protein>
    <recommendedName>
        <fullName evidence="1">Nucleoid-associated protein BT9727_0020</fullName>
    </recommendedName>
</protein>
<proteinExistence type="inferred from homology"/>
<gene>
    <name type="ordered locus">BT9727_0020</name>
</gene>
<evidence type="ECO:0000255" key="1">
    <source>
        <dbReference type="HAMAP-Rule" id="MF_00274"/>
    </source>
</evidence>
<accession>Q6HPZ1</accession>
<keyword id="KW-0963">Cytoplasm</keyword>
<keyword id="KW-0238">DNA-binding</keyword>
<dbReference type="EMBL" id="AE017355">
    <property type="protein sequence ID" value="AAT58897.1"/>
    <property type="molecule type" value="Genomic_DNA"/>
</dbReference>
<dbReference type="RefSeq" id="YP_034379.1">
    <property type="nucleotide sequence ID" value="NC_005957.1"/>
</dbReference>
<dbReference type="SMR" id="Q6HPZ1"/>
<dbReference type="KEGG" id="btk:BT9727_0020"/>
<dbReference type="PATRIC" id="fig|281309.8.peg.21"/>
<dbReference type="HOGENOM" id="CLU_140930_1_0_9"/>
<dbReference type="Proteomes" id="UP000001301">
    <property type="component" value="Chromosome"/>
</dbReference>
<dbReference type="GO" id="GO:0043590">
    <property type="term" value="C:bacterial nucleoid"/>
    <property type="evidence" value="ECO:0007669"/>
    <property type="project" value="UniProtKB-UniRule"/>
</dbReference>
<dbReference type="GO" id="GO:0005829">
    <property type="term" value="C:cytosol"/>
    <property type="evidence" value="ECO:0007669"/>
    <property type="project" value="TreeGrafter"/>
</dbReference>
<dbReference type="GO" id="GO:0003677">
    <property type="term" value="F:DNA binding"/>
    <property type="evidence" value="ECO:0007669"/>
    <property type="project" value="UniProtKB-UniRule"/>
</dbReference>
<dbReference type="FunFam" id="3.30.1310.10:FF:000002">
    <property type="entry name" value="Nucleoid-associated protein IKC_06587"/>
    <property type="match status" value="1"/>
</dbReference>
<dbReference type="Gene3D" id="3.30.1310.10">
    <property type="entry name" value="Nucleoid-associated protein YbaB-like domain"/>
    <property type="match status" value="1"/>
</dbReference>
<dbReference type="HAMAP" id="MF_00274">
    <property type="entry name" value="DNA_YbaB_EbfC"/>
    <property type="match status" value="1"/>
</dbReference>
<dbReference type="InterPro" id="IPR036894">
    <property type="entry name" value="YbaB-like_sf"/>
</dbReference>
<dbReference type="InterPro" id="IPR004401">
    <property type="entry name" value="YbaB/EbfC"/>
</dbReference>
<dbReference type="NCBIfam" id="TIGR00103">
    <property type="entry name" value="DNA_YbaB_EbfC"/>
    <property type="match status" value="1"/>
</dbReference>
<dbReference type="PANTHER" id="PTHR33449">
    <property type="entry name" value="NUCLEOID-ASSOCIATED PROTEIN YBAB"/>
    <property type="match status" value="1"/>
</dbReference>
<dbReference type="PANTHER" id="PTHR33449:SF1">
    <property type="entry name" value="NUCLEOID-ASSOCIATED PROTEIN YBAB"/>
    <property type="match status" value="1"/>
</dbReference>
<dbReference type="Pfam" id="PF02575">
    <property type="entry name" value="YbaB_DNA_bd"/>
    <property type="match status" value="1"/>
</dbReference>
<dbReference type="PIRSF" id="PIRSF004555">
    <property type="entry name" value="UCP004555"/>
    <property type="match status" value="1"/>
</dbReference>
<dbReference type="SUPFAM" id="SSF82607">
    <property type="entry name" value="YbaB-like"/>
    <property type="match status" value="1"/>
</dbReference>
<organism>
    <name type="scientific">Bacillus thuringiensis subsp. konkukian (strain 97-27)</name>
    <dbReference type="NCBI Taxonomy" id="281309"/>
    <lineage>
        <taxon>Bacteria</taxon>
        <taxon>Bacillati</taxon>
        <taxon>Bacillota</taxon>
        <taxon>Bacilli</taxon>
        <taxon>Bacillales</taxon>
        <taxon>Bacillaceae</taxon>
        <taxon>Bacillus</taxon>
        <taxon>Bacillus cereus group</taxon>
    </lineage>
</organism>
<sequence length="109" mass="11863">MMRGGMGNMNNMMKQMQKMQKEMAKAQEELGEKTVEGTAGGGMITVIANGHKQILEVKVKEEVVDPEDIEMLQDLVLAATNDALKKADELSNSTMGKFTKGLNLPGGMF</sequence>
<feature type="chain" id="PRO_1000003686" description="Nucleoid-associated protein BT9727_0020">
    <location>
        <begin position="1"/>
        <end position="109"/>
    </location>
</feature>